<protein>
    <recommendedName>
        <fullName>Zein-alpha GZ19AB11</fullName>
    </recommendedName>
    <alternativeName>
        <fullName>19 kDa zein GZ19AB11</fullName>
    </alternativeName>
</protein>
<evidence type="ECO:0000250" key="1">
    <source>
        <dbReference type="UniProtKB" id="P04698"/>
    </source>
</evidence>
<evidence type="ECO:0000305" key="2"/>
<name>ZEA5_MAIZE</name>
<proteinExistence type="inferred from homology"/>
<feature type="signal peptide">
    <location>
        <begin position="1"/>
        <end position="21"/>
    </location>
</feature>
<feature type="chain" id="PRO_0000041615" description="Zein-alpha GZ19AB11">
    <location>
        <begin position="22"/>
        <end position="234"/>
    </location>
</feature>
<keyword id="KW-1185">Reference proteome</keyword>
<keyword id="KW-0677">Repeat</keyword>
<keyword id="KW-0708">Seed storage protein</keyword>
<keyword id="KW-0732">Signal</keyword>
<keyword id="KW-0758">Storage protein</keyword>
<reference key="1">
    <citation type="journal article" date="1987" name="Mol. Gen. Genet.">
        <title>Structural and transcriptional analysis of DNA sequences flanking genes that encode 19 kilodalton zeins.</title>
        <authorList>
            <person name="Kriz A.L."/>
            <person name="Boston R.S."/>
            <person name="Larkins B.A."/>
        </authorList>
    </citation>
    <scope>NUCLEOTIDE SEQUENCE [GENOMIC DNA]</scope>
    <source>
        <strain>cv. Wisconsin 64A</strain>
    </source>
</reference>
<accession>P08416</accession>
<comment type="function">
    <text>Zeins are major seed storage proteins.</text>
</comment>
<comment type="miscellaneous">
    <text>The alpha zeins of 19 kDa and 22 kDa account for 70% of the total zein fraction. They are encoded by a large multigene family.</text>
</comment>
<comment type="miscellaneous">
    <text evidence="1">Structurally, 22K and 19K zeins are composed of nine adjacent, topologically antiparallel helices clustered within a distorted cylinder.</text>
</comment>
<comment type="similarity">
    <text evidence="2">Belongs to the zein family.</text>
</comment>
<dbReference type="EMBL" id="X05911">
    <property type="protein sequence ID" value="CAA29340.1"/>
    <property type="molecule type" value="Genomic_DNA"/>
</dbReference>
<dbReference type="PIR" id="S03417">
    <property type="entry name" value="S03417"/>
</dbReference>
<dbReference type="STRING" id="4577.P08416"/>
<dbReference type="MaizeGDB" id="58096"/>
<dbReference type="InParanoid" id="P08416"/>
<dbReference type="Proteomes" id="UP000007305">
    <property type="component" value="Unplaced"/>
</dbReference>
<dbReference type="ExpressionAtlas" id="P08416">
    <property type="expression patterns" value="baseline and differential"/>
</dbReference>
<dbReference type="GO" id="GO:0045735">
    <property type="term" value="F:nutrient reservoir activity"/>
    <property type="evidence" value="ECO:0007669"/>
    <property type="project" value="UniProtKB-KW"/>
</dbReference>
<dbReference type="InterPro" id="IPR002530">
    <property type="entry name" value="Zein"/>
</dbReference>
<dbReference type="InterPro" id="IPR051903">
    <property type="entry name" value="Zein-alpha"/>
</dbReference>
<dbReference type="PANTHER" id="PTHR48214">
    <property type="entry name" value="ZEIN-ALPHA PMS2"/>
    <property type="match status" value="1"/>
</dbReference>
<dbReference type="PANTHER" id="PTHR48214:SF1">
    <property type="entry name" value="ZEIN-ALPHA PMS2"/>
    <property type="match status" value="1"/>
</dbReference>
<dbReference type="Pfam" id="PF01559">
    <property type="entry name" value="Zein"/>
    <property type="match status" value="2"/>
</dbReference>
<organism>
    <name type="scientific">Zea mays</name>
    <name type="common">Maize</name>
    <dbReference type="NCBI Taxonomy" id="4577"/>
    <lineage>
        <taxon>Eukaryota</taxon>
        <taxon>Viridiplantae</taxon>
        <taxon>Streptophyta</taxon>
        <taxon>Embryophyta</taxon>
        <taxon>Tracheophyta</taxon>
        <taxon>Spermatophyta</taxon>
        <taxon>Magnoliopsida</taxon>
        <taxon>Liliopsida</taxon>
        <taxon>Poales</taxon>
        <taxon>Poaceae</taxon>
        <taxon>PACMAD clade</taxon>
        <taxon>Panicoideae</taxon>
        <taxon>Andropogonodae</taxon>
        <taxon>Andropogoneae</taxon>
        <taxon>Tripsacinae</taxon>
        <taxon>Zea</taxon>
    </lineage>
</organism>
<sequence length="234" mass="25440">MAAKIFCLLMLLGLSASAATATIFTQCSQAPIASLLPPYLSSAVSSVCENPILQPYRIQQAIAAGILPLSPLFLQQSSALLQQLPLVHLLAQNIRAQQLQQLVLANLAAYSQQQQFLPFNQLGSLNSASYLQQQQLPFSQLPAAYPQQFLPFNQLAALNSPAYLQQQQLLPFSQLAGVSPATFLTQPQLLPFYQHVAPNAGTLLQLQQLLPFNQLALTNPAVFYQQPIIGGALF</sequence>